<sequence length="203" mass="23775">MNKQSHYSIKSNFLSKSEKKISIDHYDEADGPSLSSSSSVISKNDLSREKIINRIKNLIDNKFSYNKNIKICTIIKNKCMIIQTIKDMLFSTNLYFIIKIKKSFGLFNSVYVKFFDKDIFENSALNLYNNAYELAKKNSTDIVLEKNILLKNELIAECKTRNYNMALDMYSHKFVYDTYCRKVFVVDDNVVLKKYKIYAHIVD</sequence>
<gene>
    <name type="ordered locus">MIMI_L333</name>
</gene>
<reference key="1">
    <citation type="journal article" date="2004" name="Science">
        <title>The 1.2-megabase genome sequence of Mimivirus.</title>
        <authorList>
            <person name="Raoult D."/>
            <person name="Audic S."/>
            <person name="Robert C."/>
            <person name="Abergel C."/>
            <person name="Renesto P."/>
            <person name="Ogata H."/>
            <person name="La Scola B."/>
            <person name="Susan M."/>
            <person name="Claverie J.-M."/>
        </authorList>
    </citation>
    <scope>NUCLEOTIDE SEQUENCE [LARGE SCALE GENOMIC DNA]</scope>
    <source>
        <strain>Rowbotham-Bradford</strain>
    </source>
</reference>
<comment type="similarity">
    <text evidence="1">Belongs to the mimivirus L332/L333/L334 family.</text>
</comment>
<organism>
    <name type="scientific">Acanthamoeba polyphaga mimivirus</name>
    <name type="common">APMV</name>
    <dbReference type="NCBI Taxonomy" id="212035"/>
    <lineage>
        <taxon>Viruses</taxon>
        <taxon>Varidnaviria</taxon>
        <taxon>Bamfordvirae</taxon>
        <taxon>Nucleocytoviricota</taxon>
        <taxon>Megaviricetes</taxon>
        <taxon>Imitervirales</taxon>
        <taxon>Mimiviridae</taxon>
        <taxon>Megamimivirinae</taxon>
        <taxon>Mimivirus</taxon>
        <taxon>Mimivirus bradfordmassiliense</taxon>
    </lineage>
</organism>
<organismHost>
    <name type="scientific">Acanthamoeba polyphaga</name>
    <name type="common">Amoeba</name>
    <dbReference type="NCBI Taxonomy" id="5757"/>
</organismHost>
<feature type="chain" id="PRO_0000071267" description="Uncharacterized protein L333">
    <location>
        <begin position="1"/>
        <end position="203"/>
    </location>
</feature>
<keyword id="KW-1185">Reference proteome</keyword>
<dbReference type="EMBL" id="AY653733">
    <property type="protein sequence ID" value="AAV50602.1"/>
    <property type="molecule type" value="Genomic_DNA"/>
</dbReference>
<dbReference type="KEGG" id="vg:9924951"/>
<dbReference type="OrthoDB" id="41530at10239"/>
<dbReference type="Proteomes" id="UP000001134">
    <property type="component" value="Genome"/>
</dbReference>
<dbReference type="InterPro" id="IPR043845">
    <property type="entry name" value="DUF5864"/>
</dbReference>
<dbReference type="Pfam" id="PF19182">
    <property type="entry name" value="DUF5864"/>
    <property type="match status" value="1"/>
</dbReference>
<protein>
    <recommendedName>
        <fullName>Uncharacterized protein L333</fullName>
    </recommendedName>
</protein>
<name>YL333_MIMIV</name>
<accession>Q5UQS0</accession>
<evidence type="ECO:0000305" key="1"/>
<proteinExistence type="inferred from homology"/>